<organism>
    <name type="scientific">Gallus gallus</name>
    <name type="common">Chicken</name>
    <dbReference type="NCBI Taxonomy" id="9031"/>
    <lineage>
        <taxon>Eukaryota</taxon>
        <taxon>Metazoa</taxon>
        <taxon>Chordata</taxon>
        <taxon>Craniata</taxon>
        <taxon>Vertebrata</taxon>
        <taxon>Euteleostomi</taxon>
        <taxon>Archelosauria</taxon>
        <taxon>Archosauria</taxon>
        <taxon>Dinosauria</taxon>
        <taxon>Saurischia</taxon>
        <taxon>Theropoda</taxon>
        <taxon>Coelurosauria</taxon>
        <taxon>Aves</taxon>
        <taxon>Neognathae</taxon>
        <taxon>Galloanserae</taxon>
        <taxon>Galliformes</taxon>
        <taxon>Phasianidae</taxon>
        <taxon>Phasianinae</taxon>
        <taxon>Gallus</taxon>
    </lineage>
</organism>
<reference key="1">
    <citation type="journal article" date="1996" name="Dev. Dyn.">
        <title>Temporal colinearity in expression of anterior Hox genes in developing chick embryos.</title>
        <authorList>
            <person name="Gaunt S.J."/>
            <person name="Strachan L."/>
        </authorList>
    </citation>
    <scope>NUCLEOTIDE SEQUENCE [MRNA]</scope>
    <source>
        <tissue>Embryo</tissue>
    </source>
</reference>
<accession>Q98924</accession>
<name>HXA9_CHICK</name>
<sequence>DGRYMRSWLEPVPGSLSFPGLPTSRHYGIKPEPLAARRGDCTTFDTHTLSLSDLPCGSPPVDRDKQSHEGAFSENNGESEANGEKPHIDPNNPAANWLHARSTRKKRCPYTKHQTLELEKEFLFNMYLTRDRRYEVARLLNLTERQVKIWFQNRRMKMKKINKDRAKDE</sequence>
<dbReference type="EMBL" id="X97750">
    <property type="protein sequence ID" value="CAA66331.1"/>
    <property type="molecule type" value="mRNA"/>
</dbReference>
<dbReference type="SMR" id="Q98924"/>
<dbReference type="STRING" id="9031.ENSGALP00000018013"/>
<dbReference type="PaxDb" id="9031-ENSGALP00000018012"/>
<dbReference type="VEuPathDB" id="HostDB:geneid_396096"/>
<dbReference type="eggNOG" id="KOG0487">
    <property type="taxonomic scope" value="Eukaryota"/>
</dbReference>
<dbReference type="InParanoid" id="Q98924"/>
<dbReference type="OrthoDB" id="6159439at2759"/>
<dbReference type="PhylomeDB" id="Q98924"/>
<dbReference type="Proteomes" id="UP000000539">
    <property type="component" value="Unassembled WGS sequence"/>
</dbReference>
<dbReference type="GO" id="GO:0005634">
    <property type="term" value="C:nucleus"/>
    <property type="evidence" value="ECO:0000318"/>
    <property type="project" value="GO_Central"/>
</dbReference>
<dbReference type="GO" id="GO:0003700">
    <property type="term" value="F:DNA-binding transcription factor activity"/>
    <property type="evidence" value="ECO:0000318"/>
    <property type="project" value="GO_Central"/>
</dbReference>
<dbReference type="GO" id="GO:0000981">
    <property type="term" value="F:DNA-binding transcription factor activity, RNA polymerase II-specific"/>
    <property type="evidence" value="ECO:0007669"/>
    <property type="project" value="InterPro"/>
</dbReference>
<dbReference type="GO" id="GO:0000978">
    <property type="term" value="F:RNA polymerase II cis-regulatory region sequence-specific DNA binding"/>
    <property type="evidence" value="ECO:0000318"/>
    <property type="project" value="GO_Central"/>
</dbReference>
<dbReference type="GO" id="GO:0009952">
    <property type="term" value="P:anterior/posterior pattern specification"/>
    <property type="evidence" value="ECO:0000318"/>
    <property type="project" value="GO_Central"/>
</dbReference>
<dbReference type="GO" id="GO:0006351">
    <property type="term" value="P:DNA-templated transcription"/>
    <property type="evidence" value="ECO:0007669"/>
    <property type="project" value="InterPro"/>
</dbReference>
<dbReference type="GO" id="GO:0048704">
    <property type="term" value="P:embryonic skeletal system morphogenesis"/>
    <property type="evidence" value="ECO:0000318"/>
    <property type="project" value="GO_Central"/>
</dbReference>
<dbReference type="GO" id="GO:0009954">
    <property type="term" value="P:proximal/distal pattern formation"/>
    <property type="evidence" value="ECO:0000318"/>
    <property type="project" value="GO_Central"/>
</dbReference>
<dbReference type="GO" id="GO:0006357">
    <property type="term" value="P:regulation of transcription by RNA polymerase II"/>
    <property type="evidence" value="ECO:0000318"/>
    <property type="project" value="GO_Central"/>
</dbReference>
<dbReference type="CDD" id="cd00086">
    <property type="entry name" value="homeodomain"/>
    <property type="match status" value="1"/>
</dbReference>
<dbReference type="FunFam" id="1.10.10.60:FF:000018">
    <property type="entry name" value="Homeobox A10"/>
    <property type="match status" value="1"/>
</dbReference>
<dbReference type="Gene3D" id="1.10.10.60">
    <property type="entry name" value="Homeodomain-like"/>
    <property type="match status" value="1"/>
</dbReference>
<dbReference type="InterPro" id="IPR050803">
    <property type="entry name" value="Abd-B_homeobox_TF"/>
</dbReference>
<dbReference type="InterPro" id="IPR001356">
    <property type="entry name" value="HD"/>
</dbReference>
<dbReference type="InterPro" id="IPR020479">
    <property type="entry name" value="HD_metazoa"/>
</dbReference>
<dbReference type="InterPro" id="IPR017970">
    <property type="entry name" value="Homeobox_CS"/>
</dbReference>
<dbReference type="InterPro" id="IPR009057">
    <property type="entry name" value="Homeodomain-like_sf"/>
</dbReference>
<dbReference type="InterPro" id="IPR006711">
    <property type="entry name" value="Hox9_activation_N"/>
</dbReference>
<dbReference type="PANTHER" id="PTHR45970">
    <property type="entry name" value="AGAP004664-PA"/>
    <property type="match status" value="1"/>
</dbReference>
<dbReference type="PANTHER" id="PTHR45970:SF3">
    <property type="entry name" value="HOMEOBOX PROTEIN HOX-A9"/>
    <property type="match status" value="1"/>
</dbReference>
<dbReference type="Pfam" id="PF00046">
    <property type="entry name" value="Homeodomain"/>
    <property type="match status" value="1"/>
</dbReference>
<dbReference type="Pfam" id="PF04617">
    <property type="entry name" value="Hox9_act"/>
    <property type="match status" value="1"/>
</dbReference>
<dbReference type="PRINTS" id="PR00024">
    <property type="entry name" value="HOMEOBOX"/>
</dbReference>
<dbReference type="SMART" id="SM00389">
    <property type="entry name" value="HOX"/>
    <property type="match status" value="1"/>
</dbReference>
<dbReference type="SUPFAM" id="SSF46689">
    <property type="entry name" value="Homeodomain-like"/>
    <property type="match status" value="1"/>
</dbReference>
<dbReference type="PROSITE" id="PS00027">
    <property type="entry name" value="HOMEOBOX_1"/>
    <property type="match status" value="1"/>
</dbReference>
<dbReference type="PROSITE" id="PS50071">
    <property type="entry name" value="HOMEOBOX_2"/>
    <property type="match status" value="1"/>
</dbReference>
<comment type="function">
    <text>Sequence-specific transcription factor which is part of a developmental regulatory system that provides cells with specific positional identities on the anterior-posterior axis.</text>
</comment>
<comment type="subcellular location">
    <subcellularLocation>
        <location>Nucleus</location>
    </subcellularLocation>
</comment>
<comment type="similarity">
    <text evidence="3">Belongs to the Abd-B homeobox family.</text>
</comment>
<proteinExistence type="evidence at transcript level"/>
<gene>
    <name type="primary">HOXA9</name>
</gene>
<keyword id="KW-0217">Developmental protein</keyword>
<keyword id="KW-0238">DNA-binding</keyword>
<keyword id="KW-0371">Homeobox</keyword>
<keyword id="KW-0539">Nucleus</keyword>
<keyword id="KW-1185">Reference proteome</keyword>
<keyword id="KW-0804">Transcription</keyword>
<keyword id="KW-0805">Transcription regulation</keyword>
<protein>
    <recommendedName>
        <fullName>Homeobox protein Hox-A9</fullName>
    </recommendedName>
</protein>
<feature type="chain" id="PRO_0000200083" description="Homeobox protein Hox-A9">
    <location>
        <begin position="1" status="less than"/>
        <end position="169"/>
    </location>
</feature>
<feature type="DNA-binding region" description="Homeobox" evidence="1">
    <location>
        <begin position="103"/>
        <end position="162"/>
    </location>
</feature>
<feature type="region of interest" description="Disordered" evidence="2">
    <location>
        <begin position="52"/>
        <end position="95"/>
    </location>
</feature>
<feature type="non-terminal residue">
    <location>
        <position position="1"/>
    </location>
</feature>
<evidence type="ECO:0000255" key="1">
    <source>
        <dbReference type="PROSITE-ProRule" id="PRU00108"/>
    </source>
</evidence>
<evidence type="ECO:0000256" key="2">
    <source>
        <dbReference type="SAM" id="MobiDB-lite"/>
    </source>
</evidence>
<evidence type="ECO:0000305" key="3"/>